<dbReference type="EC" id="1.3.7.7" evidence="1"/>
<dbReference type="EMBL" id="AJ001025">
    <property type="protein sequence ID" value="CAA04482.1"/>
    <property type="status" value="ALT_INIT"/>
    <property type="molecule type" value="Genomic_DNA"/>
</dbReference>
<dbReference type="SMR" id="O47041"/>
<dbReference type="UniPathway" id="UPA00670"/>
<dbReference type="GO" id="GO:0009507">
    <property type="term" value="C:chloroplast"/>
    <property type="evidence" value="ECO:0007669"/>
    <property type="project" value="UniProtKB-SubCell"/>
</dbReference>
<dbReference type="GO" id="GO:0051539">
    <property type="term" value="F:4 iron, 4 sulfur cluster binding"/>
    <property type="evidence" value="ECO:0007669"/>
    <property type="project" value="UniProtKB-UniRule"/>
</dbReference>
<dbReference type="GO" id="GO:0005524">
    <property type="term" value="F:ATP binding"/>
    <property type="evidence" value="ECO:0007669"/>
    <property type="project" value="UniProtKB-UniRule"/>
</dbReference>
<dbReference type="GO" id="GO:0046872">
    <property type="term" value="F:metal ion binding"/>
    <property type="evidence" value="ECO:0007669"/>
    <property type="project" value="UniProtKB-KW"/>
</dbReference>
<dbReference type="GO" id="GO:0016730">
    <property type="term" value="F:oxidoreductase activity, acting on iron-sulfur proteins as donors"/>
    <property type="evidence" value="ECO:0007669"/>
    <property type="project" value="InterPro"/>
</dbReference>
<dbReference type="GO" id="GO:0016636">
    <property type="term" value="F:oxidoreductase activity, acting on the CH-CH group of donors, iron-sulfur protein as acceptor"/>
    <property type="evidence" value="ECO:0007669"/>
    <property type="project" value="UniProtKB-UniRule"/>
</dbReference>
<dbReference type="GO" id="GO:0036068">
    <property type="term" value="P:light-independent chlorophyll biosynthetic process"/>
    <property type="evidence" value="ECO:0007669"/>
    <property type="project" value="UniProtKB-UniRule"/>
</dbReference>
<dbReference type="GO" id="GO:0019685">
    <property type="term" value="P:photosynthesis, dark reaction"/>
    <property type="evidence" value="ECO:0007669"/>
    <property type="project" value="InterPro"/>
</dbReference>
<dbReference type="CDD" id="cd02032">
    <property type="entry name" value="Bchl-like"/>
    <property type="match status" value="1"/>
</dbReference>
<dbReference type="Gene3D" id="3.40.50.300">
    <property type="entry name" value="P-loop containing nucleotide triphosphate hydrolases"/>
    <property type="match status" value="1"/>
</dbReference>
<dbReference type="HAMAP" id="MF_00355">
    <property type="entry name" value="ChlL_BchL"/>
    <property type="match status" value="1"/>
</dbReference>
<dbReference type="InterPro" id="IPR030655">
    <property type="entry name" value="NifH/chlL_CS"/>
</dbReference>
<dbReference type="InterPro" id="IPR000392">
    <property type="entry name" value="NifH/frxC"/>
</dbReference>
<dbReference type="InterPro" id="IPR027417">
    <property type="entry name" value="P-loop_NTPase"/>
</dbReference>
<dbReference type="InterPro" id="IPR005971">
    <property type="entry name" value="Protochlorophyllide_ATP-bd"/>
</dbReference>
<dbReference type="NCBIfam" id="TIGR01281">
    <property type="entry name" value="DPOR_bchL"/>
    <property type="match status" value="1"/>
</dbReference>
<dbReference type="PANTHER" id="PTHR42864">
    <property type="entry name" value="LIGHT-INDEPENDENT PROTOCHLOROPHYLLIDE REDUCTASE IRON-SULFUR ATP-BINDING PROTEIN"/>
    <property type="match status" value="1"/>
</dbReference>
<dbReference type="PANTHER" id="PTHR42864:SF2">
    <property type="entry name" value="LIGHT-INDEPENDENT PROTOCHLOROPHYLLIDE REDUCTASE IRON-SULFUR ATP-BINDING PROTEIN"/>
    <property type="match status" value="1"/>
</dbReference>
<dbReference type="Pfam" id="PF00142">
    <property type="entry name" value="Fer4_NifH"/>
    <property type="match status" value="1"/>
</dbReference>
<dbReference type="PIRSF" id="PIRSF000363">
    <property type="entry name" value="Nitrogenase_iron"/>
    <property type="match status" value="1"/>
</dbReference>
<dbReference type="PRINTS" id="PR00091">
    <property type="entry name" value="NITROGNASEII"/>
</dbReference>
<dbReference type="SUPFAM" id="SSF52540">
    <property type="entry name" value="P-loop containing nucleoside triphosphate hydrolases"/>
    <property type="match status" value="1"/>
</dbReference>
<dbReference type="PROSITE" id="PS00746">
    <property type="entry name" value="NIFH_FRXC_1"/>
    <property type="match status" value="1"/>
</dbReference>
<dbReference type="PROSITE" id="PS00692">
    <property type="entry name" value="NIFH_FRXC_2"/>
    <property type="match status" value="1"/>
</dbReference>
<dbReference type="PROSITE" id="PS51026">
    <property type="entry name" value="NIFH_FRXC_3"/>
    <property type="match status" value="1"/>
</dbReference>
<keyword id="KW-0004">4Fe-4S</keyword>
<keyword id="KW-0067">ATP-binding</keyword>
<keyword id="KW-0149">Chlorophyll biosynthesis</keyword>
<keyword id="KW-0150">Chloroplast</keyword>
<keyword id="KW-0408">Iron</keyword>
<keyword id="KW-0411">Iron-sulfur</keyword>
<keyword id="KW-0460">Magnesium</keyword>
<keyword id="KW-0479">Metal-binding</keyword>
<keyword id="KW-0547">Nucleotide-binding</keyword>
<keyword id="KW-0560">Oxidoreductase</keyword>
<keyword id="KW-0602">Photosynthesis</keyword>
<keyword id="KW-0934">Plastid</keyword>
<comment type="function">
    <text evidence="1">Component of the dark-operative protochlorophyllide reductase (DPOR) that uses Mg-ATP and reduced ferredoxin to reduce ring D of protochlorophyllide (Pchlide) to form chlorophyllide a (Chlide). This reaction is light-independent. The L component serves as a unique electron donor to the NB-component of the complex, and binds Mg-ATP.</text>
</comment>
<comment type="catalytic activity">
    <reaction evidence="1">
        <text>chlorophyllide a + oxidized 2[4Fe-4S]-[ferredoxin] + 2 ADP + 2 phosphate = protochlorophyllide a + reduced 2[4Fe-4S]-[ferredoxin] + 2 ATP + 2 H2O</text>
        <dbReference type="Rhea" id="RHEA:28202"/>
        <dbReference type="Rhea" id="RHEA-COMP:10002"/>
        <dbReference type="Rhea" id="RHEA-COMP:10004"/>
        <dbReference type="ChEBI" id="CHEBI:15377"/>
        <dbReference type="ChEBI" id="CHEBI:30616"/>
        <dbReference type="ChEBI" id="CHEBI:33722"/>
        <dbReference type="ChEBI" id="CHEBI:33723"/>
        <dbReference type="ChEBI" id="CHEBI:43474"/>
        <dbReference type="ChEBI" id="CHEBI:83348"/>
        <dbReference type="ChEBI" id="CHEBI:83350"/>
        <dbReference type="ChEBI" id="CHEBI:456216"/>
        <dbReference type="EC" id="1.3.7.7"/>
    </reaction>
</comment>
<comment type="cofactor">
    <cofactor evidence="1">
        <name>[4Fe-4S] cluster</name>
        <dbReference type="ChEBI" id="CHEBI:49883"/>
    </cofactor>
    <text evidence="1">Binds 1 [4Fe-4S] cluster per dimer.</text>
</comment>
<comment type="pathway">
    <text evidence="1">Porphyrin-containing compound metabolism; chlorophyll biosynthesis (light-independent).</text>
</comment>
<comment type="subunit">
    <text evidence="1">Homodimer. Protochlorophyllide reductase is composed of three subunits; ChlL, ChlN and ChlB.</text>
</comment>
<comment type="subcellular location">
    <subcellularLocation>
        <location>Plastid</location>
        <location>Chloroplast</location>
    </subcellularLocation>
</comment>
<comment type="similarity">
    <text evidence="1">Belongs to the NifH/BchL/ChlL family.</text>
</comment>
<comment type="sequence caution" evidence="2">
    <conflict type="erroneous initiation">
        <sequence resource="EMBL-CDS" id="CAA04482"/>
    </conflict>
</comment>
<reference key="1">
    <citation type="submission" date="1997-08" db="EMBL/GenBank/DDBJ databases">
        <authorList>
            <person name="Philipps A."/>
            <person name="Sutter A."/>
            <person name="Wild A."/>
        </authorList>
    </citation>
    <scope>NUCLEOTIDE SEQUENCE [GENOMIC DNA]</scope>
</reference>
<name>CHLL_PICAB</name>
<proteinExistence type="inferred from homology"/>
<geneLocation type="chloroplast"/>
<organism>
    <name type="scientific">Picea abies</name>
    <name type="common">Norway spruce</name>
    <name type="synonym">Picea excelsa</name>
    <dbReference type="NCBI Taxonomy" id="3329"/>
    <lineage>
        <taxon>Eukaryota</taxon>
        <taxon>Viridiplantae</taxon>
        <taxon>Streptophyta</taxon>
        <taxon>Embryophyta</taxon>
        <taxon>Tracheophyta</taxon>
        <taxon>Spermatophyta</taxon>
        <taxon>Pinopsida</taxon>
        <taxon>Pinidae</taxon>
        <taxon>Conifers I</taxon>
        <taxon>Pinales</taxon>
        <taxon>Pinaceae</taxon>
        <taxon>Picea</taxon>
    </lineage>
</organism>
<sequence>MKIAVYGKGGIGKSTTSCNISVALARRGQKVLQIGCDPKHDSTFTLTGFLIPTIIDTLQSKDYHYEDIWPEDVIHKGYGGVDCVEAGGPPAGAGCGGYVVGETVKLLKELNAFYEYDIILFDVLGDVVCGGFAAPLNYADYCVIITDNGFDALFAANRITASIREKARTHPLRLAGLVGNRTSRRDLINKYVEACPMPVIEVLPIIEDIRVSRVKGKTLFEMVGFEPSLNYVCNYYLGIADQILSQPEGIVPKEIPDRELFSLLSDLYLNPIGGGGQKKKNQENLLGFTRI</sequence>
<feature type="chain" id="PRO_0000139563" description="Light-independent protochlorophyllide reductase iron-sulfur ATP-binding protein">
    <location>
        <begin position="1"/>
        <end position="291"/>
    </location>
</feature>
<feature type="binding site" evidence="1">
    <location>
        <begin position="10"/>
        <end position="15"/>
    </location>
    <ligand>
        <name>ATP</name>
        <dbReference type="ChEBI" id="CHEBI:30616"/>
    </ligand>
</feature>
<feature type="binding site" evidence="1">
    <location>
        <position position="14"/>
    </location>
    <ligand>
        <name>Mg(2+)</name>
        <dbReference type="ChEBI" id="CHEBI:18420"/>
    </ligand>
</feature>
<feature type="binding site" evidence="1">
    <location>
        <position position="39"/>
    </location>
    <ligand>
        <name>ATP</name>
        <dbReference type="ChEBI" id="CHEBI:30616"/>
    </ligand>
</feature>
<feature type="binding site" evidence="1">
    <location>
        <position position="95"/>
    </location>
    <ligand>
        <name>[4Fe-4S] cluster</name>
        <dbReference type="ChEBI" id="CHEBI:49883"/>
        <note>ligand shared between dimeric partners</note>
    </ligand>
</feature>
<feature type="binding site" evidence="1">
    <location>
        <position position="129"/>
    </location>
    <ligand>
        <name>[4Fe-4S] cluster</name>
        <dbReference type="ChEBI" id="CHEBI:49883"/>
        <note>ligand shared between dimeric partners</note>
    </ligand>
</feature>
<feature type="binding site" evidence="1">
    <location>
        <begin position="180"/>
        <end position="181"/>
    </location>
    <ligand>
        <name>ATP</name>
        <dbReference type="ChEBI" id="CHEBI:30616"/>
    </ligand>
</feature>
<protein>
    <recommendedName>
        <fullName evidence="1">Light-independent protochlorophyllide reductase iron-sulfur ATP-binding protein</fullName>
        <shortName evidence="1">DPOR subunit L</shortName>
        <shortName evidence="1">LI-POR subunit L</shortName>
        <ecNumber evidence="1">1.3.7.7</ecNumber>
    </recommendedName>
</protein>
<accession>O47041</accession>
<evidence type="ECO:0000255" key="1">
    <source>
        <dbReference type="HAMAP-Rule" id="MF_00355"/>
    </source>
</evidence>
<evidence type="ECO:0000305" key="2"/>
<gene>
    <name evidence="1" type="primary">chlL</name>
    <name type="synonym">frxC</name>
</gene>